<organism>
    <name type="scientific">Pseudomonas syringae pv. tomato (strain ATCC BAA-871 / DC3000)</name>
    <dbReference type="NCBI Taxonomy" id="223283"/>
    <lineage>
        <taxon>Bacteria</taxon>
        <taxon>Pseudomonadati</taxon>
        <taxon>Pseudomonadota</taxon>
        <taxon>Gammaproteobacteria</taxon>
        <taxon>Pseudomonadales</taxon>
        <taxon>Pseudomonadaceae</taxon>
        <taxon>Pseudomonas</taxon>
    </lineage>
</organism>
<protein>
    <recommendedName>
        <fullName evidence="1">Probable potassium transport system protein Kup</fullName>
    </recommendedName>
</protein>
<keyword id="KW-0997">Cell inner membrane</keyword>
<keyword id="KW-1003">Cell membrane</keyword>
<keyword id="KW-0406">Ion transport</keyword>
<keyword id="KW-0472">Membrane</keyword>
<keyword id="KW-0630">Potassium</keyword>
<keyword id="KW-0633">Potassium transport</keyword>
<keyword id="KW-1185">Reference proteome</keyword>
<keyword id="KW-0769">Symport</keyword>
<keyword id="KW-0812">Transmembrane</keyword>
<keyword id="KW-1133">Transmembrane helix</keyword>
<keyword id="KW-0813">Transport</keyword>
<gene>
    <name evidence="1" type="primary">kup</name>
    <name type="ordered locus">PSPTO_3993</name>
</gene>
<comment type="function">
    <text evidence="1">Transport of potassium into the cell. Likely operates as a K(+):H(+) symporter.</text>
</comment>
<comment type="catalytic activity">
    <reaction evidence="1">
        <text>K(+)(in) + H(+)(in) = K(+)(out) + H(+)(out)</text>
        <dbReference type="Rhea" id="RHEA:28490"/>
        <dbReference type="ChEBI" id="CHEBI:15378"/>
        <dbReference type="ChEBI" id="CHEBI:29103"/>
    </reaction>
    <physiologicalReaction direction="right-to-left" evidence="1">
        <dbReference type="Rhea" id="RHEA:28492"/>
    </physiologicalReaction>
</comment>
<comment type="subcellular location">
    <subcellularLocation>
        <location evidence="1">Cell inner membrane</location>
        <topology evidence="1">Multi-pass membrane protein</topology>
    </subcellularLocation>
</comment>
<comment type="similarity">
    <text evidence="1">Belongs to the HAK/KUP transporter (TC 2.A.72) family.</text>
</comment>
<dbReference type="EMBL" id="AE016853">
    <property type="protein sequence ID" value="AAO57452.1"/>
    <property type="molecule type" value="Genomic_DNA"/>
</dbReference>
<dbReference type="RefSeq" id="NP_793757.1">
    <property type="nucleotide sequence ID" value="NC_004578.1"/>
</dbReference>
<dbReference type="RefSeq" id="WP_005766050.1">
    <property type="nucleotide sequence ID" value="NC_004578.1"/>
</dbReference>
<dbReference type="STRING" id="223283.PSPTO_3993"/>
<dbReference type="GeneID" id="1185671"/>
<dbReference type="KEGG" id="pst:PSPTO_3993"/>
<dbReference type="PATRIC" id="fig|223283.9.peg.4095"/>
<dbReference type="eggNOG" id="COG3158">
    <property type="taxonomic scope" value="Bacteria"/>
</dbReference>
<dbReference type="HOGENOM" id="CLU_008142_4_2_6"/>
<dbReference type="OrthoDB" id="9805577at2"/>
<dbReference type="PhylomeDB" id="Q87Y19"/>
<dbReference type="Proteomes" id="UP000002515">
    <property type="component" value="Chromosome"/>
</dbReference>
<dbReference type="GO" id="GO:0005886">
    <property type="term" value="C:plasma membrane"/>
    <property type="evidence" value="ECO:0007669"/>
    <property type="project" value="UniProtKB-SubCell"/>
</dbReference>
<dbReference type="GO" id="GO:0015079">
    <property type="term" value="F:potassium ion transmembrane transporter activity"/>
    <property type="evidence" value="ECO:0007669"/>
    <property type="project" value="UniProtKB-UniRule"/>
</dbReference>
<dbReference type="GO" id="GO:0015293">
    <property type="term" value="F:symporter activity"/>
    <property type="evidence" value="ECO:0007669"/>
    <property type="project" value="UniProtKB-UniRule"/>
</dbReference>
<dbReference type="HAMAP" id="MF_01522">
    <property type="entry name" value="Kup"/>
    <property type="match status" value="1"/>
</dbReference>
<dbReference type="InterPro" id="IPR003855">
    <property type="entry name" value="K+_transporter"/>
</dbReference>
<dbReference type="InterPro" id="IPR053952">
    <property type="entry name" value="K_trans_C"/>
</dbReference>
<dbReference type="InterPro" id="IPR053951">
    <property type="entry name" value="K_trans_N"/>
</dbReference>
<dbReference type="InterPro" id="IPR023051">
    <property type="entry name" value="Kup"/>
</dbReference>
<dbReference type="PANTHER" id="PTHR30540:SF79">
    <property type="entry name" value="LOW AFFINITY POTASSIUM TRANSPORT SYSTEM PROTEIN KUP"/>
    <property type="match status" value="1"/>
</dbReference>
<dbReference type="PANTHER" id="PTHR30540">
    <property type="entry name" value="OSMOTIC STRESS POTASSIUM TRANSPORTER"/>
    <property type="match status" value="1"/>
</dbReference>
<dbReference type="Pfam" id="PF02705">
    <property type="entry name" value="K_trans"/>
    <property type="match status" value="1"/>
</dbReference>
<dbReference type="Pfam" id="PF22776">
    <property type="entry name" value="K_trans_C"/>
    <property type="match status" value="1"/>
</dbReference>
<name>KUP_PSESM</name>
<sequence length="631" mass="68487">MSQTNSHAQAGGTAKPIGLLIAAVGVVYGDIGTSPLYTLKEVFQGGYGVEVTHDAILGVLSLIFWSLIWVVSFKYMAFVLRADNQGEGGIMALMALARRASAKHPKLQMMMVVFGLFGAALFYGDSMITPAVSVLSAMEGLELAFDGLDHWIVPMALVVLVGLFLIQRHGTARIGVLFGPVMVVWFLVLGALGVYGIMQSPEVLKAVNPAWGLNFFIIHPGIGVAILGAVVLALTGAEALYADMGHFGRKPISRAWFILVLPALLLNYFGQGALVLGNPETVRNPFYLLAPSWALLPLIGLSTMATIIASQAVISGAFSMTLQAIQLGYIPRMHIQHTSSDAQGQIYIGAVNWALMVGVIMLVIGFESSGALASAYGVAVTGTMLCTTILVSTVMLMLWKWPPLLAVPLLICLLLVDGLFFAANVPKIFQGGAFPVLAGAVLFILMTTWKRGKHLLAERIDEGGLPLPIFIGSIRVQPPHRVQGTAVFLTARSDAVPHALLHNMLHNQVLHEQVVLLTVVYEDTPRVPSAQRFEVESYGEGFYRVILHFGFIDEPDVPAALALCHLAELDFSPMRTTYFLSRETVIPSKMDGMARWREALFAFMLKNANGNLRFFKLPFNRVIELGTQVEM</sequence>
<reference key="1">
    <citation type="journal article" date="2003" name="Proc. Natl. Acad. Sci. U.S.A.">
        <title>The complete genome sequence of the Arabidopsis and tomato pathogen Pseudomonas syringae pv. tomato DC3000.</title>
        <authorList>
            <person name="Buell C.R."/>
            <person name="Joardar V."/>
            <person name="Lindeberg M."/>
            <person name="Selengut J."/>
            <person name="Paulsen I.T."/>
            <person name="Gwinn M.L."/>
            <person name="Dodson R.J."/>
            <person name="DeBoy R.T."/>
            <person name="Durkin A.S."/>
            <person name="Kolonay J.F."/>
            <person name="Madupu R."/>
            <person name="Daugherty S.C."/>
            <person name="Brinkac L.M."/>
            <person name="Beanan M.J."/>
            <person name="Haft D.H."/>
            <person name="Nelson W.C."/>
            <person name="Davidsen T.M."/>
            <person name="Zafar N."/>
            <person name="Zhou L."/>
            <person name="Liu J."/>
            <person name="Yuan Q."/>
            <person name="Khouri H.M."/>
            <person name="Fedorova N.B."/>
            <person name="Tran B."/>
            <person name="Russell D."/>
            <person name="Berry K.J."/>
            <person name="Utterback T.R."/>
            <person name="Van Aken S.E."/>
            <person name="Feldblyum T.V."/>
            <person name="D'Ascenzo M."/>
            <person name="Deng W.-L."/>
            <person name="Ramos A.R."/>
            <person name="Alfano J.R."/>
            <person name="Cartinhour S."/>
            <person name="Chatterjee A.K."/>
            <person name="Delaney T.P."/>
            <person name="Lazarowitz S.G."/>
            <person name="Martin G.B."/>
            <person name="Schneider D.J."/>
            <person name="Tang X."/>
            <person name="Bender C.L."/>
            <person name="White O."/>
            <person name="Fraser C.M."/>
            <person name="Collmer A."/>
        </authorList>
    </citation>
    <scope>NUCLEOTIDE SEQUENCE [LARGE SCALE GENOMIC DNA]</scope>
    <source>
        <strain>ATCC BAA-871 / DC3000</strain>
    </source>
</reference>
<feature type="chain" id="PRO_0000209043" description="Probable potassium transport system protein Kup">
    <location>
        <begin position="1"/>
        <end position="631"/>
    </location>
</feature>
<feature type="transmembrane region" description="Helical" evidence="1">
    <location>
        <begin position="17"/>
        <end position="37"/>
    </location>
</feature>
<feature type="transmembrane region" description="Helical" evidence="1">
    <location>
        <begin position="56"/>
        <end position="76"/>
    </location>
</feature>
<feature type="transmembrane region" description="Helical" evidence="1">
    <location>
        <begin position="109"/>
        <end position="129"/>
    </location>
</feature>
<feature type="transmembrane region" description="Helical" evidence="1">
    <location>
        <begin position="147"/>
        <end position="167"/>
    </location>
</feature>
<feature type="transmembrane region" description="Helical" evidence="1">
    <location>
        <begin position="174"/>
        <end position="194"/>
    </location>
</feature>
<feature type="transmembrane region" description="Helical" evidence="1">
    <location>
        <begin position="215"/>
        <end position="235"/>
    </location>
</feature>
<feature type="transmembrane region" description="Helical" evidence="1">
    <location>
        <begin position="256"/>
        <end position="276"/>
    </location>
</feature>
<feature type="transmembrane region" description="Helical" evidence="1">
    <location>
        <begin position="288"/>
        <end position="308"/>
    </location>
</feature>
<feature type="transmembrane region" description="Helical" evidence="1">
    <location>
        <begin position="346"/>
        <end position="366"/>
    </location>
</feature>
<feature type="transmembrane region" description="Helical" evidence="1">
    <location>
        <begin position="378"/>
        <end position="398"/>
    </location>
</feature>
<feature type="transmembrane region" description="Helical" evidence="1">
    <location>
        <begin position="403"/>
        <end position="423"/>
    </location>
</feature>
<feature type="transmembrane region" description="Helical" evidence="1">
    <location>
        <begin position="428"/>
        <end position="448"/>
    </location>
</feature>
<evidence type="ECO:0000255" key="1">
    <source>
        <dbReference type="HAMAP-Rule" id="MF_01522"/>
    </source>
</evidence>
<proteinExistence type="inferred from homology"/>
<accession>Q87Y19</accession>